<dbReference type="EMBL" id="BC099249">
    <property type="protein sequence ID" value="AAH99249.1"/>
    <property type="molecule type" value="mRNA"/>
</dbReference>
<dbReference type="RefSeq" id="NP_001085218.1">
    <property type="nucleotide sequence ID" value="NM_001091749.1"/>
</dbReference>
<dbReference type="SMR" id="Q4FZQ6"/>
<dbReference type="DNASU" id="432312"/>
<dbReference type="GeneID" id="432312"/>
<dbReference type="KEGG" id="xla:432312"/>
<dbReference type="AGR" id="Xenbase:XB-GENE-980002"/>
<dbReference type="CTD" id="432312"/>
<dbReference type="Xenbase" id="XB-GENE-980002">
    <property type="gene designation" value="prpf38a.S"/>
</dbReference>
<dbReference type="OrthoDB" id="190958at2759"/>
<dbReference type="Proteomes" id="UP000186698">
    <property type="component" value="Chromosome 4S"/>
</dbReference>
<dbReference type="Bgee" id="432312">
    <property type="expression patterns" value="Expressed in egg cell and 19 other cell types or tissues"/>
</dbReference>
<dbReference type="GO" id="GO:0005634">
    <property type="term" value="C:nucleus"/>
    <property type="evidence" value="ECO:0000250"/>
    <property type="project" value="UniProtKB"/>
</dbReference>
<dbReference type="GO" id="GO:0071011">
    <property type="term" value="C:precatalytic spliceosome"/>
    <property type="evidence" value="ECO:0000318"/>
    <property type="project" value="GO_Central"/>
</dbReference>
<dbReference type="GO" id="GO:0071005">
    <property type="term" value="C:U2-type precatalytic spliceosome"/>
    <property type="evidence" value="ECO:0000250"/>
    <property type="project" value="UniProtKB"/>
</dbReference>
<dbReference type="GO" id="GO:0000398">
    <property type="term" value="P:mRNA splicing, via spliceosome"/>
    <property type="evidence" value="ECO:0000250"/>
    <property type="project" value="UniProtKB"/>
</dbReference>
<dbReference type="InterPro" id="IPR005037">
    <property type="entry name" value="PRP38"/>
</dbReference>
<dbReference type="PANTHER" id="PTHR23142">
    <property type="entry name" value="PRE-MRNA-SPLICING FACTOR 38A-RELATED"/>
    <property type="match status" value="1"/>
</dbReference>
<dbReference type="Pfam" id="PF03371">
    <property type="entry name" value="PRP38"/>
    <property type="match status" value="1"/>
</dbReference>
<gene>
    <name type="primary">prpf38a</name>
</gene>
<proteinExistence type="evidence at transcript level"/>
<accession>Q4FZQ6</accession>
<comment type="function">
    <text evidence="1">Involved in pre-mRNA splicing as a component of the spliceosome.</text>
</comment>
<comment type="subunit">
    <text evidence="1">Component of the spliceosome B complex.</text>
</comment>
<comment type="subcellular location">
    <subcellularLocation>
        <location evidence="1">Nucleus</location>
    </subcellularLocation>
</comment>
<comment type="similarity">
    <text evidence="3">Belongs to the PRP38 family.</text>
</comment>
<name>PR38A_XENLA</name>
<organism>
    <name type="scientific">Xenopus laevis</name>
    <name type="common">African clawed frog</name>
    <dbReference type="NCBI Taxonomy" id="8355"/>
    <lineage>
        <taxon>Eukaryota</taxon>
        <taxon>Metazoa</taxon>
        <taxon>Chordata</taxon>
        <taxon>Craniata</taxon>
        <taxon>Vertebrata</taxon>
        <taxon>Euteleostomi</taxon>
        <taxon>Amphibia</taxon>
        <taxon>Batrachia</taxon>
        <taxon>Anura</taxon>
        <taxon>Pipoidea</taxon>
        <taxon>Pipidae</taxon>
        <taxon>Xenopodinae</taxon>
        <taxon>Xenopus</taxon>
        <taxon>Xenopus</taxon>
    </lineage>
</organism>
<protein>
    <recommendedName>
        <fullName>Pre-mRNA-splicing factor 38A</fullName>
    </recommendedName>
</protein>
<sequence>MANRTVKDAHSVHGTNPQYLVEKIIRTRIYESKYWKEECFGLTAELVVDKAMELKFVGGVYGGNIKPTPFLCLTLKMLQIQPEKDIIVEFIKNEDFKYVRALGALYMRLTGTATDCYKYLEPLYNDYRKVKVQNRDGEFELMHVDEFIDQLLHEERVCDVILPRLQKRFVLEETEQLDPRVSALEEDMDDVESSEEEEDDDEKGRDPSPEHHRRNYRDLDRPRRSPSPRYRRSRSRSPRRRSRSPKRRSPSPPRRERHRSKSPRRHRSRSRERRHRSKSKSPGHHRSHRHRSHSKSPERSKKSHKKSRRGNE</sequence>
<feature type="chain" id="PRO_0000287277" description="Pre-mRNA-splicing factor 38A">
    <location>
        <begin position="1"/>
        <end position="312"/>
    </location>
</feature>
<feature type="region of interest" description="N-terminal protein interaction domain" evidence="1">
    <location>
        <begin position="1"/>
        <end position="179"/>
    </location>
</feature>
<feature type="region of interest" description="Disordered" evidence="2">
    <location>
        <begin position="180"/>
        <end position="312"/>
    </location>
</feature>
<feature type="compositionally biased region" description="Acidic residues" evidence="2">
    <location>
        <begin position="184"/>
        <end position="201"/>
    </location>
</feature>
<feature type="compositionally biased region" description="Basic and acidic residues" evidence="2">
    <location>
        <begin position="202"/>
        <end position="223"/>
    </location>
</feature>
<feature type="compositionally biased region" description="Basic residues" evidence="2">
    <location>
        <begin position="224"/>
        <end position="294"/>
    </location>
</feature>
<feature type="compositionally biased region" description="Basic residues" evidence="2">
    <location>
        <begin position="301"/>
        <end position="312"/>
    </location>
</feature>
<keyword id="KW-0507">mRNA processing</keyword>
<keyword id="KW-0508">mRNA splicing</keyword>
<keyword id="KW-0539">Nucleus</keyword>
<keyword id="KW-1185">Reference proteome</keyword>
<keyword id="KW-0747">Spliceosome</keyword>
<reference key="1">
    <citation type="submission" date="2005-07" db="EMBL/GenBank/DDBJ databases">
        <authorList>
            <consortium name="NIH - Xenopus Gene Collection (XGC) project"/>
        </authorList>
    </citation>
    <scope>NUCLEOTIDE SEQUENCE [LARGE SCALE MRNA]</scope>
    <source>
        <tissue>Tadpole</tissue>
    </source>
</reference>
<evidence type="ECO:0000250" key="1">
    <source>
        <dbReference type="UniProtKB" id="Q8NAV1"/>
    </source>
</evidence>
<evidence type="ECO:0000256" key="2">
    <source>
        <dbReference type="SAM" id="MobiDB-lite"/>
    </source>
</evidence>
<evidence type="ECO:0000305" key="3"/>